<protein>
    <recommendedName>
        <fullName>3-oxoacyl-[acyl-carrier-protein] reductase 5, chloroplastic</fullName>
        <ecNumber>1.1.1.100</ecNumber>
    </recommendedName>
    <alternativeName>
        <fullName>3-ketoacyl-acyl carrier protein reductase 5</fullName>
    </alternativeName>
</protein>
<reference key="1">
    <citation type="submission" date="2001-06" db="EMBL/GenBank/DDBJ databases">
        <authorList>
            <person name="McDonald F.S."/>
            <person name="White A.J."/>
            <person name="Elborough K.M."/>
            <person name="Slabas A.R."/>
        </authorList>
    </citation>
    <scope>NUCLEOTIDE SEQUENCE [MRNA]</scope>
    <source>
        <strain>cv. Jet neuf</strain>
        <tissue>Embryo</tissue>
    </source>
</reference>
<accession>Q93X68</accession>
<name>FABG5_BRANA</name>
<keyword id="KW-0150">Chloroplast</keyword>
<keyword id="KW-0275">Fatty acid biosynthesis</keyword>
<keyword id="KW-0276">Fatty acid metabolism</keyword>
<keyword id="KW-0444">Lipid biosynthesis</keyword>
<keyword id="KW-0443">Lipid metabolism</keyword>
<keyword id="KW-0521">NADP</keyword>
<keyword id="KW-0560">Oxidoreductase</keyword>
<keyword id="KW-0934">Plastid</keyword>
<keyword id="KW-0809">Transit peptide</keyword>
<feature type="transit peptide" description="Chloroplast" evidence="2">
    <location>
        <begin position="1" status="less than"/>
        <end position="57"/>
    </location>
</feature>
<feature type="chain" id="PRO_0000031980" description="3-oxoacyl-[acyl-carrier-protein] reductase 5, chloroplastic">
    <location>
        <begin position="58"/>
        <end position="317"/>
    </location>
</feature>
<feature type="active site" description="Proton acceptor" evidence="3">
    <location>
        <position position="224"/>
    </location>
</feature>
<feature type="binding site" evidence="1">
    <location>
        <begin position="79"/>
        <end position="103"/>
    </location>
    <ligand>
        <name>NADP(+)</name>
        <dbReference type="ChEBI" id="CHEBI:58349"/>
    </ligand>
</feature>
<feature type="binding site" evidence="1">
    <location>
        <position position="211"/>
    </location>
    <ligand>
        <name>substrate</name>
    </ligand>
</feature>
<feature type="non-terminal residue">
    <location>
        <position position="1"/>
    </location>
</feature>
<organism>
    <name type="scientific">Brassica napus</name>
    <name type="common">Rape</name>
    <dbReference type="NCBI Taxonomy" id="3708"/>
    <lineage>
        <taxon>Eukaryota</taxon>
        <taxon>Viridiplantae</taxon>
        <taxon>Streptophyta</taxon>
        <taxon>Embryophyta</taxon>
        <taxon>Tracheophyta</taxon>
        <taxon>Spermatophyta</taxon>
        <taxon>Magnoliopsida</taxon>
        <taxon>eudicotyledons</taxon>
        <taxon>Gunneridae</taxon>
        <taxon>Pentapetalae</taxon>
        <taxon>rosids</taxon>
        <taxon>malvids</taxon>
        <taxon>Brassicales</taxon>
        <taxon>Brassicaceae</taxon>
        <taxon>Brassiceae</taxon>
        <taxon>Brassica</taxon>
    </lineage>
</organism>
<proteinExistence type="evidence at transcript level"/>
<sequence length="317" mass="33491">TTVAATKLTSLKATAGKLGYREICQVRQWAPLKSAMPHFGMLRCATSTVVKAQAQAQATATEQTTEEAVPKVESPVVVVTGASRGIGKAIALSLGKAGCKVLVNYARSAKEAEEVSKQIEEYGGEAITFGGDVSKEADVDSMMKTAVDKWGTIDVVVNNAGITRDTLLIRMKKSQWDEVIDLNLTGVFLCTQAATKIMMKKRKGRIINIASVVGLIGNIGQANYAAAKAGVIGFSKTAAREGASRNINVNVVCPGFIASDMTAKLGEDMEKKILGTIPLGRYGQPEYVAGLVEFLALSPASSYITGHTFSIHGGFAI</sequence>
<gene>
    <name type="primary">bkr1</name>
</gene>
<dbReference type="EC" id="1.1.1.100"/>
<dbReference type="EMBL" id="AJ243083">
    <property type="protein sequence ID" value="CAC41362.1"/>
    <property type="molecule type" value="mRNA"/>
</dbReference>
<dbReference type="SMR" id="Q93X68"/>
<dbReference type="UniPathway" id="UPA00094"/>
<dbReference type="GO" id="GO:0009507">
    <property type="term" value="C:chloroplast"/>
    <property type="evidence" value="ECO:0007669"/>
    <property type="project" value="UniProtKB-SubCell"/>
</dbReference>
<dbReference type="GO" id="GO:0004316">
    <property type="term" value="F:3-oxoacyl-[acyl-carrier-protein] reductase (NADPH) activity"/>
    <property type="evidence" value="ECO:0007669"/>
    <property type="project" value="UniProtKB-EC"/>
</dbReference>
<dbReference type="GO" id="GO:0051287">
    <property type="term" value="F:NAD binding"/>
    <property type="evidence" value="ECO:0007669"/>
    <property type="project" value="InterPro"/>
</dbReference>
<dbReference type="GO" id="GO:0006633">
    <property type="term" value="P:fatty acid biosynthetic process"/>
    <property type="evidence" value="ECO:0007669"/>
    <property type="project" value="UniProtKB-UniPathway"/>
</dbReference>
<dbReference type="CDD" id="cd05333">
    <property type="entry name" value="BKR_SDR_c"/>
    <property type="match status" value="1"/>
</dbReference>
<dbReference type="FunFam" id="3.40.50.720:FF:000194">
    <property type="entry name" value="3-oxoacyl-[acyl-carrier-protein] reductase, chloroplastic"/>
    <property type="match status" value="1"/>
</dbReference>
<dbReference type="Gene3D" id="3.40.50.720">
    <property type="entry name" value="NAD(P)-binding Rossmann-like Domain"/>
    <property type="match status" value="1"/>
</dbReference>
<dbReference type="InterPro" id="IPR011284">
    <property type="entry name" value="3oxo_ACP_reduc"/>
</dbReference>
<dbReference type="InterPro" id="IPR036291">
    <property type="entry name" value="NAD(P)-bd_dom_sf"/>
</dbReference>
<dbReference type="InterPro" id="IPR020904">
    <property type="entry name" value="Sc_DH/Rdtase_CS"/>
</dbReference>
<dbReference type="InterPro" id="IPR050259">
    <property type="entry name" value="SDR"/>
</dbReference>
<dbReference type="InterPro" id="IPR002347">
    <property type="entry name" value="SDR_fam"/>
</dbReference>
<dbReference type="NCBIfam" id="TIGR01830">
    <property type="entry name" value="3oxo_ACP_reduc"/>
    <property type="match status" value="1"/>
</dbReference>
<dbReference type="NCBIfam" id="NF009466">
    <property type="entry name" value="PRK12826.1-2"/>
    <property type="match status" value="1"/>
</dbReference>
<dbReference type="PANTHER" id="PTHR42879">
    <property type="entry name" value="3-OXOACYL-(ACYL-CARRIER-PROTEIN) REDUCTASE"/>
    <property type="match status" value="1"/>
</dbReference>
<dbReference type="PANTHER" id="PTHR42879:SF2">
    <property type="entry name" value="3-OXOACYL-[ACYL-CARRIER-PROTEIN] REDUCTASE FABG"/>
    <property type="match status" value="1"/>
</dbReference>
<dbReference type="Pfam" id="PF00106">
    <property type="entry name" value="adh_short"/>
    <property type="match status" value="1"/>
</dbReference>
<dbReference type="PRINTS" id="PR00081">
    <property type="entry name" value="GDHRDH"/>
</dbReference>
<dbReference type="PRINTS" id="PR00080">
    <property type="entry name" value="SDRFAMILY"/>
</dbReference>
<dbReference type="SMART" id="SM00822">
    <property type="entry name" value="PKS_KR"/>
    <property type="match status" value="1"/>
</dbReference>
<dbReference type="SUPFAM" id="SSF51735">
    <property type="entry name" value="NAD(P)-binding Rossmann-fold domains"/>
    <property type="match status" value="1"/>
</dbReference>
<dbReference type="PROSITE" id="PS00061">
    <property type="entry name" value="ADH_SHORT"/>
    <property type="match status" value="1"/>
</dbReference>
<evidence type="ECO:0000250" key="1"/>
<evidence type="ECO:0000255" key="2"/>
<evidence type="ECO:0000255" key="3">
    <source>
        <dbReference type="PROSITE-ProRule" id="PRU10001"/>
    </source>
</evidence>
<evidence type="ECO:0000305" key="4"/>
<comment type="catalytic activity">
    <reaction>
        <text>a (3R)-hydroxyacyl-[ACP] + NADP(+) = a 3-oxoacyl-[ACP] + NADPH + H(+)</text>
        <dbReference type="Rhea" id="RHEA:17397"/>
        <dbReference type="Rhea" id="RHEA-COMP:9916"/>
        <dbReference type="Rhea" id="RHEA-COMP:9945"/>
        <dbReference type="ChEBI" id="CHEBI:15378"/>
        <dbReference type="ChEBI" id="CHEBI:57783"/>
        <dbReference type="ChEBI" id="CHEBI:58349"/>
        <dbReference type="ChEBI" id="CHEBI:78776"/>
        <dbReference type="ChEBI" id="CHEBI:78827"/>
        <dbReference type="EC" id="1.1.1.100"/>
    </reaction>
</comment>
<comment type="pathway">
    <text>Lipid metabolism; fatty acid biosynthesis.</text>
</comment>
<comment type="subunit">
    <text evidence="1">Homotetramer.</text>
</comment>
<comment type="subcellular location">
    <subcellularLocation>
        <location evidence="1">Plastid</location>
        <location evidence="1">Chloroplast</location>
    </subcellularLocation>
    <subcellularLocation>
        <location evidence="1">Plastid</location>
    </subcellularLocation>
    <text evidence="1">And non-photosynthetic plastids.</text>
</comment>
<comment type="similarity">
    <text evidence="4">Belongs to the short-chain dehydrogenases/reductases (SDR) family.</text>
</comment>